<gene>
    <name evidence="1" type="primary">rpsJ</name>
    <name type="ordered locus">stu1935</name>
</gene>
<reference key="1">
    <citation type="journal article" date="2004" name="Nat. Biotechnol.">
        <title>Complete sequence and comparative genome analysis of the dairy bacterium Streptococcus thermophilus.</title>
        <authorList>
            <person name="Bolotin A."/>
            <person name="Quinquis B."/>
            <person name="Renault P."/>
            <person name="Sorokin A."/>
            <person name="Ehrlich S.D."/>
            <person name="Kulakauskas S."/>
            <person name="Lapidus A."/>
            <person name="Goltsman E."/>
            <person name="Mazur M."/>
            <person name="Pusch G.D."/>
            <person name="Fonstein M."/>
            <person name="Overbeek R."/>
            <person name="Kyprides N."/>
            <person name="Purnelle B."/>
            <person name="Prozzi D."/>
            <person name="Ngui K."/>
            <person name="Masuy D."/>
            <person name="Hancy F."/>
            <person name="Burteau S."/>
            <person name="Boutry M."/>
            <person name="Delcour J."/>
            <person name="Goffeau A."/>
            <person name="Hols P."/>
        </authorList>
    </citation>
    <scope>NUCLEOTIDE SEQUENCE [LARGE SCALE GENOMIC DNA]</scope>
    <source>
        <strain>ATCC BAA-250 / LMG 18311</strain>
    </source>
</reference>
<proteinExistence type="inferred from homology"/>
<dbReference type="EMBL" id="CP000023">
    <property type="protein sequence ID" value="AAV61533.1"/>
    <property type="molecule type" value="Genomic_DNA"/>
</dbReference>
<dbReference type="RefSeq" id="WP_002885653.1">
    <property type="nucleotide sequence ID" value="NC_006448.1"/>
</dbReference>
<dbReference type="SMR" id="Q5M2B2"/>
<dbReference type="STRING" id="264199.stu1935"/>
<dbReference type="GeneID" id="93793087"/>
<dbReference type="KEGG" id="stl:stu1935"/>
<dbReference type="eggNOG" id="COG0051">
    <property type="taxonomic scope" value="Bacteria"/>
</dbReference>
<dbReference type="HOGENOM" id="CLU_122625_1_3_9"/>
<dbReference type="Proteomes" id="UP000001170">
    <property type="component" value="Chromosome"/>
</dbReference>
<dbReference type="GO" id="GO:1990904">
    <property type="term" value="C:ribonucleoprotein complex"/>
    <property type="evidence" value="ECO:0007669"/>
    <property type="project" value="UniProtKB-KW"/>
</dbReference>
<dbReference type="GO" id="GO:0005840">
    <property type="term" value="C:ribosome"/>
    <property type="evidence" value="ECO:0007669"/>
    <property type="project" value="UniProtKB-KW"/>
</dbReference>
<dbReference type="GO" id="GO:0003735">
    <property type="term" value="F:structural constituent of ribosome"/>
    <property type="evidence" value="ECO:0007669"/>
    <property type="project" value="InterPro"/>
</dbReference>
<dbReference type="GO" id="GO:0000049">
    <property type="term" value="F:tRNA binding"/>
    <property type="evidence" value="ECO:0007669"/>
    <property type="project" value="UniProtKB-UniRule"/>
</dbReference>
<dbReference type="GO" id="GO:0006412">
    <property type="term" value="P:translation"/>
    <property type="evidence" value="ECO:0007669"/>
    <property type="project" value="UniProtKB-UniRule"/>
</dbReference>
<dbReference type="FunFam" id="3.30.70.600:FF:000001">
    <property type="entry name" value="30S ribosomal protein S10"/>
    <property type="match status" value="1"/>
</dbReference>
<dbReference type="Gene3D" id="3.30.70.600">
    <property type="entry name" value="Ribosomal protein S10 domain"/>
    <property type="match status" value="1"/>
</dbReference>
<dbReference type="HAMAP" id="MF_00508">
    <property type="entry name" value="Ribosomal_uS10"/>
    <property type="match status" value="1"/>
</dbReference>
<dbReference type="InterPro" id="IPR001848">
    <property type="entry name" value="Ribosomal_uS10"/>
</dbReference>
<dbReference type="InterPro" id="IPR018268">
    <property type="entry name" value="Ribosomal_uS10_CS"/>
</dbReference>
<dbReference type="InterPro" id="IPR027486">
    <property type="entry name" value="Ribosomal_uS10_dom"/>
</dbReference>
<dbReference type="InterPro" id="IPR036838">
    <property type="entry name" value="Ribosomal_uS10_dom_sf"/>
</dbReference>
<dbReference type="NCBIfam" id="NF001861">
    <property type="entry name" value="PRK00596.1"/>
    <property type="match status" value="1"/>
</dbReference>
<dbReference type="NCBIfam" id="TIGR01049">
    <property type="entry name" value="rpsJ_bact"/>
    <property type="match status" value="1"/>
</dbReference>
<dbReference type="PANTHER" id="PTHR11700">
    <property type="entry name" value="30S RIBOSOMAL PROTEIN S10 FAMILY MEMBER"/>
    <property type="match status" value="1"/>
</dbReference>
<dbReference type="Pfam" id="PF00338">
    <property type="entry name" value="Ribosomal_S10"/>
    <property type="match status" value="1"/>
</dbReference>
<dbReference type="PRINTS" id="PR00971">
    <property type="entry name" value="RIBOSOMALS10"/>
</dbReference>
<dbReference type="SMART" id="SM01403">
    <property type="entry name" value="Ribosomal_S10"/>
    <property type="match status" value="1"/>
</dbReference>
<dbReference type="SUPFAM" id="SSF54999">
    <property type="entry name" value="Ribosomal protein S10"/>
    <property type="match status" value="1"/>
</dbReference>
<dbReference type="PROSITE" id="PS00361">
    <property type="entry name" value="RIBOSOMAL_S10"/>
    <property type="match status" value="1"/>
</dbReference>
<sequence>MANKKIRIRLKAYEHRTLDTAAEKIVETATRTGATVAGPVPLPTERSLYTIIRATHKYKDSREQFEMRTHKRLIDIINPTQKTVDALMKLDLPSGVNVEIKL</sequence>
<evidence type="ECO:0000255" key="1">
    <source>
        <dbReference type="HAMAP-Rule" id="MF_00508"/>
    </source>
</evidence>
<evidence type="ECO:0000305" key="2"/>
<comment type="function">
    <text evidence="1">Involved in the binding of tRNA to the ribosomes.</text>
</comment>
<comment type="subunit">
    <text evidence="1">Part of the 30S ribosomal subunit.</text>
</comment>
<comment type="similarity">
    <text evidence="1">Belongs to the universal ribosomal protein uS10 family.</text>
</comment>
<accession>Q5M2B2</accession>
<organism>
    <name type="scientific">Streptococcus thermophilus (strain ATCC BAA-250 / LMG 18311)</name>
    <dbReference type="NCBI Taxonomy" id="264199"/>
    <lineage>
        <taxon>Bacteria</taxon>
        <taxon>Bacillati</taxon>
        <taxon>Bacillota</taxon>
        <taxon>Bacilli</taxon>
        <taxon>Lactobacillales</taxon>
        <taxon>Streptococcaceae</taxon>
        <taxon>Streptococcus</taxon>
    </lineage>
</organism>
<keyword id="KW-1185">Reference proteome</keyword>
<keyword id="KW-0687">Ribonucleoprotein</keyword>
<keyword id="KW-0689">Ribosomal protein</keyword>
<name>RS10_STRT2</name>
<feature type="chain" id="PRO_0000237102" description="Small ribosomal subunit protein uS10">
    <location>
        <begin position="1"/>
        <end position="102"/>
    </location>
</feature>
<protein>
    <recommendedName>
        <fullName evidence="1">Small ribosomal subunit protein uS10</fullName>
    </recommendedName>
    <alternativeName>
        <fullName evidence="2">30S ribosomal protein S10</fullName>
    </alternativeName>
</protein>